<feature type="chain" id="PRO_1000087065" description="Large ribosomal subunit protein uL6">
    <location>
        <begin position="1"/>
        <end position="176"/>
    </location>
</feature>
<feature type="region of interest" description="Disordered" evidence="2">
    <location>
        <begin position="151"/>
        <end position="176"/>
    </location>
</feature>
<feature type="compositionally biased region" description="Basic and acidic residues" evidence="2">
    <location>
        <begin position="151"/>
        <end position="170"/>
    </location>
</feature>
<sequence>MSRVAKAPVAIPAGVEVTLNEQTITVKGTKGSLTRVINSDVSVVVEDNEIKCSPVESAKTAAQAGTARALINNMVVGVTEGFVKKLTLVGVGYRAKLAGKDIDLTLGFSHPLVHKLPDGVTAECPSQTEIVLSGTDKQLIGQVAAEIRGYRPPEPYKGKGVRYADEQVRRKEAKKK</sequence>
<protein>
    <recommendedName>
        <fullName evidence="1">Large ribosomal subunit protein uL6</fullName>
    </recommendedName>
    <alternativeName>
        <fullName evidence="3">50S ribosomal protein L6</fullName>
    </alternativeName>
</protein>
<dbReference type="EMBL" id="CP000931">
    <property type="protein sequence ID" value="ABZ78659.1"/>
    <property type="molecule type" value="Genomic_DNA"/>
</dbReference>
<dbReference type="RefSeq" id="WP_012279170.1">
    <property type="nucleotide sequence ID" value="NC_010334.1"/>
</dbReference>
<dbReference type="SMR" id="B0TLZ7"/>
<dbReference type="STRING" id="458817.Shal_4119"/>
<dbReference type="KEGG" id="shl:Shal_4119"/>
<dbReference type="eggNOG" id="COG0097">
    <property type="taxonomic scope" value="Bacteria"/>
</dbReference>
<dbReference type="HOGENOM" id="CLU_065464_1_2_6"/>
<dbReference type="OrthoDB" id="9805007at2"/>
<dbReference type="Proteomes" id="UP000001317">
    <property type="component" value="Chromosome"/>
</dbReference>
<dbReference type="GO" id="GO:0022625">
    <property type="term" value="C:cytosolic large ribosomal subunit"/>
    <property type="evidence" value="ECO:0007669"/>
    <property type="project" value="TreeGrafter"/>
</dbReference>
<dbReference type="GO" id="GO:0019843">
    <property type="term" value="F:rRNA binding"/>
    <property type="evidence" value="ECO:0007669"/>
    <property type="project" value="UniProtKB-UniRule"/>
</dbReference>
<dbReference type="GO" id="GO:0003735">
    <property type="term" value="F:structural constituent of ribosome"/>
    <property type="evidence" value="ECO:0007669"/>
    <property type="project" value="InterPro"/>
</dbReference>
<dbReference type="GO" id="GO:0002181">
    <property type="term" value="P:cytoplasmic translation"/>
    <property type="evidence" value="ECO:0007669"/>
    <property type="project" value="TreeGrafter"/>
</dbReference>
<dbReference type="FunFam" id="3.90.930.12:FF:000001">
    <property type="entry name" value="50S ribosomal protein L6"/>
    <property type="match status" value="1"/>
</dbReference>
<dbReference type="FunFam" id="3.90.930.12:FF:000002">
    <property type="entry name" value="50S ribosomal protein L6"/>
    <property type="match status" value="1"/>
</dbReference>
<dbReference type="Gene3D" id="3.90.930.12">
    <property type="entry name" value="Ribosomal protein L6, alpha-beta domain"/>
    <property type="match status" value="2"/>
</dbReference>
<dbReference type="HAMAP" id="MF_01365_B">
    <property type="entry name" value="Ribosomal_uL6_B"/>
    <property type="match status" value="1"/>
</dbReference>
<dbReference type="InterPro" id="IPR000702">
    <property type="entry name" value="Ribosomal_uL6-like"/>
</dbReference>
<dbReference type="InterPro" id="IPR036789">
    <property type="entry name" value="Ribosomal_uL6-like_a/b-dom_sf"/>
</dbReference>
<dbReference type="InterPro" id="IPR020040">
    <property type="entry name" value="Ribosomal_uL6_a/b-dom"/>
</dbReference>
<dbReference type="InterPro" id="IPR019906">
    <property type="entry name" value="Ribosomal_uL6_bac-type"/>
</dbReference>
<dbReference type="InterPro" id="IPR002358">
    <property type="entry name" value="Ribosomal_uL6_CS"/>
</dbReference>
<dbReference type="NCBIfam" id="TIGR03654">
    <property type="entry name" value="L6_bact"/>
    <property type="match status" value="1"/>
</dbReference>
<dbReference type="PANTHER" id="PTHR11655">
    <property type="entry name" value="60S/50S RIBOSOMAL PROTEIN L6/L9"/>
    <property type="match status" value="1"/>
</dbReference>
<dbReference type="PANTHER" id="PTHR11655:SF14">
    <property type="entry name" value="LARGE RIBOSOMAL SUBUNIT PROTEIN UL6M"/>
    <property type="match status" value="1"/>
</dbReference>
<dbReference type="Pfam" id="PF00347">
    <property type="entry name" value="Ribosomal_L6"/>
    <property type="match status" value="2"/>
</dbReference>
<dbReference type="PIRSF" id="PIRSF002162">
    <property type="entry name" value="Ribosomal_L6"/>
    <property type="match status" value="1"/>
</dbReference>
<dbReference type="PRINTS" id="PR00059">
    <property type="entry name" value="RIBOSOMALL6"/>
</dbReference>
<dbReference type="SUPFAM" id="SSF56053">
    <property type="entry name" value="Ribosomal protein L6"/>
    <property type="match status" value="2"/>
</dbReference>
<dbReference type="PROSITE" id="PS00525">
    <property type="entry name" value="RIBOSOMAL_L6_1"/>
    <property type="match status" value="1"/>
</dbReference>
<proteinExistence type="inferred from homology"/>
<gene>
    <name evidence="1" type="primary">rplF</name>
    <name type="ordered locus">Shal_4119</name>
</gene>
<evidence type="ECO:0000255" key="1">
    <source>
        <dbReference type="HAMAP-Rule" id="MF_01365"/>
    </source>
</evidence>
<evidence type="ECO:0000256" key="2">
    <source>
        <dbReference type="SAM" id="MobiDB-lite"/>
    </source>
</evidence>
<evidence type="ECO:0000305" key="3"/>
<comment type="function">
    <text evidence="1">This protein binds to the 23S rRNA, and is important in its secondary structure. It is located near the subunit interface in the base of the L7/L12 stalk, and near the tRNA binding site of the peptidyltransferase center.</text>
</comment>
<comment type="subunit">
    <text evidence="1">Part of the 50S ribosomal subunit.</text>
</comment>
<comment type="similarity">
    <text evidence="1">Belongs to the universal ribosomal protein uL6 family.</text>
</comment>
<keyword id="KW-0687">Ribonucleoprotein</keyword>
<keyword id="KW-0689">Ribosomal protein</keyword>
<keyword id="KW-0694">RNA-binding</keyword>
<keyword id="KW-0699">rRNA-binding</keyword>
<name>RL6_SHEHH</name>
<organism>
    <name type="scientific">Shewanella halifaxensis (strain HAW-EB4)</name>
    <dbReference type="NCBI Taxonomy" id="458817"/>
    <lineage>
        <taxon>Bacteria</taxon>
        <taxon>Pseudomonadati</taxon>
        <taxon>Pseudomonadota</taxon>
        <taxon>Gammaproteobacteria</taxon>
        <taxon>Alteromonadales</taxon>
        <taxon>Shewanellaceae</taxon>
        <taxon>Shewanella</taxon>
    </lineage>
</organism>
<accession>B0TLZ7</accession>
<reference key="1">
    <citation type="submission" date="2008-01" db="EMBL/GenBank/DDBJ databases">
        <title>Complete sequence of Shewanella halifaxensis HAW-EB4.</title>
        <authorList>
            <consortium name="US DOE Joint Genome Institute"/>
            <person name="Copeland A."/>
            <person name="Lucas S."/>
            <person name="Lapidus A."/>
            <person name="Glavina del Rio T."/>
            <person name="Dalin E."/>
            <person name="Tice H."/>
            <person name="Bruce D."/>
            <person name="Goodwin L."/>
            <person name="Pitluck S."/>
            <person name="Sims D."/>
            <person name="Brettin T."/>
            <person name="Detter J.C."/>
            <person name="Han C."/>
            <person name="Kuske C.R."/>
            <person name="Schmutz J."/>
            <person name="Larimer F."/>
            <person name="Land M."/>
            <person name="Hauser L."/>
            <person name="Kyrpides N."/>
            <person name="Kim E."/>
            <person name="Zhao J.-S."/>
            <person name="Richardson P."/>
        </authorList>
    </citation>
    <scope>NUCLEOTIDE SEQUENCE [LARGE SCALE GENOMIC DNA]</scope>
    <source>
        <strain>HAW-EB4</strain>
    </source>
</reference>